<organism>
    <name type="scientific">Chromohalobacter salexigens (strain ATCC BAA-138 / DSM 3043 / CIP 106854 / NCIMB 13768 / 1H11)</name>
    <dbReference type="NCBI Taxonomy" id="290398"/>
    <lineage>
        <taxon>Bacteria</taxon>
        <taxon>Pseudomonadati</taxon>
        <taxon>Pseudomonadota</taxon>
        <taxon>Gammaproteobacteria</taxon>
        <taxon>Oceanospirillales</taxon>
        <taxon>Halomonadaceae</taxon>
        <taxon>Chromohalobacter</taxon>
    </lineage>
</organism>
<comment type="function">
    <text evidence="1">Catalyzes the last two sequential reactions in the de novo biosynthetic pathway for UDP-N-acetylglucosamine (UDP-GlcNAc). The C-terminal domain catalyzes the transfer of acetyl group from acetyl coenzyme A to glucosamine-1-phosphate (GlcN-1-P) to produce N-acetylglucosamine-1-phosphate (GlcNAc-1-P), which is converted into UDP-GlcNAc by the transfer of uridine 5-monophosphate (from uridine 5-triphosphate), a reaction catalyzed by the N-terminal domain.</text>
</comment>
<comment type="catalytic activity">
    <reaction evidence="1">
        <text>alpha-D-glucosamine 1-phosphate + acetyl-CoA = N-acetyl-alpha-D-glucosamine 1-phosphate + CoA + H(+)</text>
        <dbReference type="Rhea" id="RHEA:13725"/>
        <dbReference type="ChEBI" id="CHEBI:15378"/>
        <dbReference type="ChEBI" id="CHEBI:57287"/>
        <dbReference type="ChEBI" id="CHEBI:57288"/>
        <dbReference type="ChEBI" id="CHEBI:57776"/>
        <dbReference type="ChEBI" id="CHEBI:58516"/>
        <dbReference type="EC" id="2.3.1.157"/>
    </reaction>
</comment>
<comment type="catalytic activity">
    <reaction evidence="1">
        <text>N-acetyl-alpha-D-glucosamine 1-phosphate + UTP + H(+) = UDP-N-acetyl-alpha-D-glucosamine + diphosphate</text>
        <dbReference type="Rhea" id="RHEA:13509"/>
        <dbReference type="ChEBI" id="CHEBI:15378"/>
        <dbReference type="ChEBI" id="CHEBI:33019"/>
        <dbReference type="ChEBI" id="CHEBI:46398"/>
        <dbReference type="ChEBI" id="CHEBI:57705"/>
        <dbReference type="ChEBI" id="CHEBI:57776"/>
        <dbReference type="EC" id="2.7.7.23"/>
    </reaction>
</comment>
<comment type="cofactor">
    <cofactor evidence="1">
        <name>Mg(2+)</name>
        <dbReference type="ChEBI" id="CHEBI:18420"/>
    </cofactor>
    <text evidence="1">Binds 1 Mg(2+) ion per subunit.</text>
</comment>
<comment type="pathway">
    <text evidence="1">Nucleotide-sugar biosynthesis; UDP-N-acetyl-alpha-D-glucosamine biosynthesis; N-acetyl-alpha-D-glucosamine 1-phosphate from alpha-D-glucosamine 6-phosphate (route II): step 2/2.</text>
</comment>
<comment type="pathway">
    <text evidence="1">Nucleotide-sugar biosynthesis; UDP-N-acetyl-alpha-D-glucosamine biosynthesis; UDP-N-acetyl-alpha-D-glucosamine from N-acetyl-alpha-D-glucosamine 1-phosphate: step 1/1.</text>
</comment>
<comment type="pathway">
    <text evidence="1">Bacterial outer membrane biogenesis; LPS lipid A biosynthesis.</text>
</comment>
<comment type="subunit">
    <text evidence="1">Homotrimer.</text>
</comment>
<comment type="subcellular location">
    <subcellularLocation>
        <location evidence="1">Cytoplasm</location>
    </subcellularLocation>
</comment>
<comment type="similarity">
    <text evidence="1">In the N-terminal section; belongs to the N-acetylglucosamine-1-phosphate uridyltransferase family.</text>
</comment>
<comment type="similarity">
    <text evidence="1">In the C-terminal section; belongs to the transferase hexapeptide repeat family.</text>
</comment>
<comment type="sequence caution" evidence="2">
    <conflict type="erroneous initiation">
        <sequence resource="EMBL-CDS" id="ABE60626"/>
    </conflict>
</comment>
<proteinExistence type="inferred from homology"/>
<accession>Q1QSD2</accession>
<gene>
    <name evidence="1" type="primary">glmU</name>
    <name type="ordered locus">Csal_3282</name>
</gene>
<reference key="1">
    <citation type="journal article" date="2011" name="Stand. Genomic Sci.">
        <title>Complete genome sequence of the halophilic and highly halotolerant Chromohalobacter salexigens type strain (1H11(T)).</title>
        <authorList>
            <person name="Copeland A."/>
            <person name="O'Connor K."/>
            <person name="Lucas S."/>
            <person name="Lapidus A."/>
            <person name="Berry K.W."/>
            <person name="Detter J.C."/>
            <person name="Del Rio T.G."/>
            <person name="Hammon N."/>
            <person name="Dalin E."/>
            <person name="Tice H."/>
            <person name="Pitluck S."/>
            <person name="Bruce D."/>
            <person name="Goodwin L."/>
            <person name="Han C."/>
            <person name="Tapia R."/>
            <person name="Saunders E."/>
            <person name="Schmutz J."/>
            <person name="Brettin T."/>
            <person name="Larimer F."/>
            <person name="Land M."/>
            <person name="Hauser L."/>
            <person name="Vargas C."/>
            <person name="Nieto J.J."/>
            <person name="Kyrpides N.C."/>
            <person name="Ivanova N."/>
            <person name="Goker M."/>
            <person name="Klenk H.P."/>
            <person name="Csonka L.N."/>
            <person name="Woyke T."/>
        </authorList>
    </citation>
    <scope>NUCLEOTIDE SEQUENCE [LARGE SCALE GENOMIC DNA]</scope>
    <source>
        <strain>ATCC BAA-138 / DSM 3043 / CIP 106854 / NCIMB 13768 / 1H11</strain>
    </source>
</reference>
<dbReference type="EC" id="2.7.7.23" evidence="1"/>
<dbReference type="EC" id="2.3.1.157" evidence="1"/>
<dbReference type="EMBL" id="CP000285">
    <property type="protein sequence ID" value="ABE60626.1"/>
    <property type="status" value="ALT_INIT"/>
    <property type="molecule type" value="Genomic_DNA"/>
</dbReference>
<dbReference type="RefSeq" id="WP_043559805.1">
    <property type="nucleotide sequence ID" value="NC_007963.1"/>
</dbReference>
<dbReference type="SMR" id="Q1QSD2"/>
<dbReference type="STRING" id="290398.Csal_3282"/>
<dbReference type="GeneID" id="95335973"/>
<dbReference type="KEGG" id="csa:Csal_3282"/>
<dbReference type="eggNOG" id="COG1207">
    <property type="taxonomic scope" value="Bacteria"/>
</dbReference>
<dbReference type="HOGENOM" id="CLU_029499_15_2_6"/>
<dbReference type="OrthoDB" id="9775031at2"/>
<dbReference type="UniPathway" id="UPA00113">
    <property type="reaction ID" value="UER00532"/>
</dbReference>
<dbReference type="UniPathway" id="UPA00113">
    <property type="reaction ID" value="UER00533"/>
</dbReference>
<dbReference type="UniPathway" id="UPA00973"/>
<dbReference type="Proteomes" id="UP000000239">
    <property type="component" value="Chromosome"/>
</dbReference>
<dbReference type="GO" id="GO:0005737">
    <property type="term" value="C:cytoplasm"/>
    <property type="evidence" value="ECO:0007669"/>
    <property type="project" value="UniProtKB-SubCell"/>
</dbReference>
<dbReference type="GO" id="GO:0016020">
    <property type="term" value="C:membrane"/>
    <property type="evidence" value="ECO:0007669"/>
    <property type="project" value="GOC"/>
</dbReference>
<dbReference type="GO" id="GO:0019134">
    <property type="term" value="F:glucosamine-1-phosphate N-acetyltransferase activity"/>
    <property type="evidence" value="ECO:0007669"/>
    <property type="project" value="UniProtKB-UniRule"/>
</dbReference>
<dbReference type="GO" id="GO:0000287">
    <property type="term" value="F:magnesium ion binding"/>
    <property type="evidence" value="ECO:0007669"/>
    <property type="project" value="UniProtKB-UniRule"/>
</dbReference>
<dbReference type="GO" id="GO:0003977">
    <property type="term" value="F:UDP-N-acetylglucosamine diphosphorylase activity"/>
    <property type="evidence" value="ECO:0007669"/>
    <property type="project" value="UniProtKB-UniRule"/>
</dbReference>
<dbReference type="GO" id="GO:0000902">
    <property type="term" value="P:cell morphogenesis"/>
    <property type="evidence" value="ECO:0007669"/>
    <property type="project" value="UniProtKB-UniRule"/>
</dbReference>
<dbReference type="GO" id="GO:0071555">
    <property type="term" value="P:cell wall organization"/>
    <property type="evidence" value="ECO:0007669"/>
    <property type="project" value="UniProtKB-KW"/>
</dbReference>
<dbReference type="GO" id="GO:0009245">
    <property type="term" value="P:lipid A biosynthetic process"/>
    <property type="evidence" value="ECO:0007669"/>
    <property type="project" value="UniProtKB-UniRule"/>
</dbReference>
<dbReference type="GO" id="GO:0009252">
    <property type="term" value="P:peptidoglycan biosynthetic process"/>
    <property type="evidence" value="ECO:0007669"/>
    <property type="project" value="UniProtKB-UniRule"/>
</dbReference>
<dbReference type="GO" id="GO:0008360">
    <property type="term" value="P:regulation of cell shape"/>
    <property type="evidence" value="ECO:0007669"/>
    <property type="project" value="UniProtKB-KW"/>
</dbReference>
<dbReference type="GO" id="GO:0006048">
    <property type="term" value="P:UDP-N-acetylglucosamine biosynthetic process"/>
    <property type="evidence" value="ECO:0007669"/>
    <property type="project" value="UniProtKB-UniPathway"/>
</dbReference>
<dbReference type="CDD" id="cd02540">
    <property type="entry name" value="GT2_GlmU_N_bac"/>
    <property type="match status" value="1"/>
</dbReference>
<dbReference type="CDD" id="cd03353">
    <property type="entry name" value="LbH_GlmU_C"/>
    <property type="match status" value="1"/>
</dbReference>
<dbReference type="Gene3D" id="2.160.10.10">
    <property type="entry name" value="Hexapeptide repeat proteins"/>
    <property type="match status" value="1"/>
</dbReference>
<dbReference type="Gene3D" id="3.90.550.10">
    <property type="entry name" value="Spore Coat Polysaccharide Biosynthesis Protein SpsA, Chain A"/>
    <property type="match status" value="1"/>
</dbReference>
<dbReference type="HAMAP" id="MF_01631">
    <property type="entry name" value="GlmU"/>
    <property type="match status" value="1"/>
</dbReference>
<dbReference type="InterPro" id="IPR005882">
    <property type="entry name" value="Bifunctional_GlmU"/>
</dbReference>
<dbReference type="InterPro" id="IPR050065">
    <property type="entry name" value="GlmU-like"/>
</dbReference>
<dbReference type="InterPro" id="IPR038009">
    <property type="entry name" value="GlmU_C_LbH"/>
</dbReference>
<dbReference type="InterPro" id="IPR001451">
    <property type="entry name" value="Hexapep"/>
</dbReference>
<dbReference type="InterPro" id="IPR018357">
    <property type="entry name" value="Hexapep_transf_CS"/>
</dbReference>
<dbReference type="InterPro" id="IPR025877">
    <property type="entry name" value="MobA-like_NTP_Trfase"/>
</dbReference>
<dbReference type="InterPro" id="IPR029044">
    <property type="entry name" value="Nucleotide-diphossugar_trans"/>
</dbReference>
<dbReference type="InterPro" id="IPR011004">
    <property type="entry name" value="Trimer_LpxA-like_sf"/>
</dbReference>
<dbReference type="NCBIfam" id="TIGR01173">
    <property type="entry name" value="glmU"/>
    <property type="match status" value="1"/>
</dbReference>
<dbReference type="NCBIfam" id="NF010933">
    <property type="entry name" value="PRK14353.1"/>
    <property type="match status" value="1"/>
</dbReference>
<dbReference type="PANTHER" id="PTHR43584:SF3">
    <property type="entry name" value="BIFUNCTIONAL PROTEIN GLMU"/>
    <property type="match status" value="1"/>
</dbReference>
<dbReference type="PANTHER" id="PTHR43584">
    <property type="entry name" value="NUCLEOTIDYL TRANSFERASE"/>
    <property type="match status" value="1"/>
</dbReference>
<dbReference type="Pfam" id="PF00132">
    <property type="entry name" value="Hexapep"/>
    <property type="match status" value="1"/>
</dbReference>
<dbReference type="Pfam" id="PF12804">
    <property type="entry name" value="NTP_transf_3"/>
    <property type="match status" value="1"/>
</dbReference>
<dbReference type="SUPFAM" id="SSF53448">
    <property type="entry name" value="Nucleotide-diphospho-sugar transferases"/>
    <property type="match status" value="1"/>
</dbReference>
<dbReference type="SUPFAM" id="SSF51161">
    <property type="entry name" value="Trimeric LpxA-like enzymes"/>
    <property type="match status" value="1"/>
</dbReference>
<dbReference type="PROSITE" id="PS00101">
    <property type="entry name" value="HEXAPEP_TRANSFERASES"/>
    <property type="match status" value="1"/>
</dbReference>
<evidence type="ECO:0000255" key="1">
    <source>
        <dbReference type="HAMAP-Rule" id="MF_01631"/>
    </source>
</evidence>
<evidence type="ECO:0000305" key="2"/>
<sequence>MTLDVVILAAGQGTRMRSAKPKVLHALAGKPLVSHVLDTAEQLGATRTHVVIGHGAEQVETELDGRDVRFALQAEQKGTGHAVAQTLDELGDGKVLILYGDVPLIRAETLTALLDEVDERRLGLLTVTLDDPGGYGRIVRDAEGRVTRIVEHKDASEAERGITECNTGIVAATGTQLKRWLPQLSAENAQGEYYLTDIFAMAAAEGIEVATASPASALEVEGVNNRSQMAALERAYQRDRAERLLTEGVALADPARFDVRGRLQCGHDVFIDVGCVFEGDVTLGDGVSVGPYTLIRDSHVAAGTVIEAHSIIEGAEVAEQAHIGPFARLRPGTRLARQSKVGNFVETKNAEVGEGSKINHLSYVGDASLGGGVNIGAGTITCNYDGANKHRTEIGDDVFVGSNTALVAPVALGAGATIGAGSTISRDVEAGALAVARTRQTTRAGWKRPRKSS</sequence>
<name>GLMU_CHRSD</name>
<protein>
    <recommendedName>
        <fullName evidence="1">Bifunctional protein GlmU</fullName>
    </recommendedName>
    <domain>
        <recommendedName>
            <fullName evidence="1">UDP-N-acetylglucosamine pyrophosphorylase</fullName>
            <ecNumber evidence="1">2.7.7.23</ecNumber>
        </recommendedName>
        <alternativeName>
            <fullName evidence="1">N-acetylglucosamine-1-phosphate uridyltransferase</fullName>
        </alternativeName>
    </domain>
    <domain>
        <recommendedName>
            <fullName evidence="1">Glucosamine-1-phosphate N-acetyltransferase</fullName>
            <ecNumber evidence="1">2.3.1.157</ecNumber>
        </recommendedName>
    </domain>
</protein>
<keyword id="KW-0012">Acyltransferase</keyword>
<keyword id="KW-0133">Cell shape</keyword>
<keyword id="KW-0961">Cell wall biogenesis/degradation</keyword>
<keyword id="KW-0963">Cytoplasm</keyword>
<keyword id="KW-0460">Magnesium</keyword>
<keyword id="KW-0479">Metal-binding</keyword>
<keyword id="KW-0511">Multifunctional enzyme</keyword>
<keyword id="KW-0548">Nucleotidyltransferase</keyword>
<keyword id="KW-0573">Peptidoglycan synthesis</keyword>
<keyword id="KW-1185">Reference proteome</keyword>
<keyword id="KW-0677">Repeat</keyword>
<keyword id="KW-0808">Transferase</keyword>
<feature type="chain" id="PRO_0000263122" description="Bifunctional protein GlmU">
    <location>
        <begin position="1"/>
        <end position="453"/>
    </location>
</feature>
<feature type="region of interest" description="Pyrophosphorylase" evidence="1">
    <location>
        <begin position="1"/>
        <end position="226"/>
    </location>
</feature>
<feature type="region of interest" description="Linker" evidence="1">
    <location>
        <begin position="227"/>
        <end position="247"/>
    </location>
</feature>
<feature type="region of interest" description="N-acetyltransferase" evidence="1">
    <location>
        <begin position="248"/>
        <end position="453"/>
    </location>
</feature>
<feature type="active site" description="Proton acceptor" evidence="1">
    <location>
        <position position="360"/>
    </location>
</feature>
<feature type="binding site" evidence="1">
    <location>
        <begin position="8"/>
        <end position="11"/>
    </location>
    <ligand>
        <name>UDP-N-acetyl-alpha-D-glucosamine</name>
        <dbReference type="ChEBI" id="CHEBI:57705"/>
    </ligand>
</feature>
<feature type="binding site" evidence="1">
    <location>
        <position position="22"/>
    </location>
    <ligand>
        <name>UDP-N-acetyl-alpha-D-glucosamine</name>
        <dbReference type="ChEBI" id="CHEBI:57705"/>
    </ligand>
</feature>
<feature type="binding site" evidence="1">
    <location>
        <position position="73"/>
    </location>
    <ligand>
        <name>UDP-N-acetyl-alpha-D-glucosamine</name>
        <dbReference type="ChEBI" id="CHEBI:57705"/>
    </ligand>
</feature>
<feature type="binding site" evidence="1">
    <location>
        <begin position="78"/>
        <end position="79"/>
    </location>
    <ligand>
        <name>UDP-N-acetyl-alpha-D-glucosamine</name>
        <dbReference type="ChEBI" id="CHEBI:57705"/>
    </ligand>
</feature>
<feature type="binding site" evidence="1">
    <location>
        <begin position="99"/>
        <end position="101"/>
    </location>
    <ligand>
        <name>UDP-N-acetyl-alpha-D-glucosamine</name>
        <dbReference type="ChEBI" id="CHEBI:57705"/>
    </ligand>
</feature>
<feature type="binding site" evidence="1">
    <location>
        <position position="101"/>
    </location>
    <ligand>
        <name>Mg(2+)</name>
        <dbReference type="ChEBI" id="CHEBI:18420"/>
    </ligand>
</feature>
<feature type="binding site" evidence="1">
    <location>
        <position position="136"/>
    </location>
    <ligand>
        <name>UDP-N-acetyl-alpha-D-glucosamine</name>
        <dbReference type="ChEBI" id="CHEBI:57705"/>
    </ligand>
</feature>
<feature type="binding site" evidence="1">
    <location>
        <position position="151"/>
    </location>
    <ligand>
        <name>UDP-N-acetyl-alpha-D-glucosamine</name>
        <dbReference type="ChEBI" id="CHEBI:57705"/>
    </ligand>
</feature>
<feature type="binding site" evidence="1">
    <location>
        <position position="166"/>
    </location>
    <ligand>
        <name>UDP-N-acetyl-alpha-D-glucosamine</name>
        <dbReference type="ChEBI" id="CHEBI:57705"/>
    </ligand>
</feature>
<feature type="binding site" evidence="1">
    <location>
        <position position="224"/>
    </location>
    <ligand>
        <name>Mg(2+)</name>
        <dbReference type="ChEBI" id="CHEBI:18420"/>
    </ligand>
</feature>
<feature type="binding site" evidence="1">
    <location>
        <position position="224"/>
    </location>
    <ligand>
        <name>UDP-N-acetyl-alpha-D-glucosamine</name>
        <dbReference type="ChEBI" id="CHEBI:57705"/>
    </ligand>
</feature>
<feature type="binding site" evidence="1">
    <location>
        <position position="330"/>
    </location>
    <ligand>
        <name>UDP-N-acetyl-alpha-D-glucosamine</name>
        <dbReference type="ChEBI" id="CHEBI:57705"/>
    </ligand>
</feature>
<feature type="binding site" evidence="1">
    <location>
        <position position="348"/>
    </location>
    <ligand>
        <name>UDP-N-acetyl-alpha-D-glucosamine</name>
        <dbReference type="ChEBI" id="CHEBI:57705"/>
    </ligand>
</feature>
<feature type="binding site" evidence="1">
    <location>
        <position position="363"/>
    </location>
    <ligand>
        <name>UDP-N-acetyl-alpha-D-glucosamine</name>
        <dbReference type="ChEBI" id="CHEBI:57705"/>
    </ligand>
</feature>
<feature type="binding site" evidence="1">
    <location>
        <position position="374"/>
    </location>
    <ligand>
        <name>UDP-N-acetyl-alpha-D-glucosamine</name>
        <dbReference type="ChEBI" id="CHEBI:57705"/>
    </ligand>
</feature>
<feature type="binding site" evidence="1">
    <location>
        <position position="377"/>
    </location>
    <ligand>
        <name>acetyl-CoA</name>
        <dbReference type="ChEBI" id="CHEBI:57288"/>
    </ligand>
</feature>
<feature type="binding site" evidence="1">
    <location>
        <begin position="383"/>
        <end position="384"/>
    </location>
    <ligand>
        <name>acetyl-CoA</name>
        <dbReference type="ChEBI" id="CHEBI:57288"/>
    </ligand>
</feature>
<feature type="binding site" evidence="1">
    <location>
        <position position="402"/>
    </location>
    <ligand>
        <name>acetyl-CoA</name>
        <dbReference type="ChEBI" id="CHEBI:57288"/>
    </ligand>
</feature>
<feature type="binding site" evidence="1">
    <location>
        <position position="420"/>
    </location>
    <ligand>
        <name>acetyl-CoA</name>
        <dbReference type="ChEBI" id="CHEBI:57288"/>
    </ligand>
</feature>
<feature type="binding site" evidence="1">
    <location>
        <position position="437"/>
    </location>
    <ligand>
        <name>acetyl-CoA</name>
        <dbReference type="ChEBI" id="CHEBI:57288"/>
    </ligand>
</feature>